<dbReference type="EMBL" id="CP000927">
    <property type="protein sequence ID" value="ABZ70752.1"/>
    <property type="molecule type" value="Genomic_DNA"/>
</dbReference>
<dbReference type="SMR" id="B0T2D1"/>
<dbReference type="STRING" id="366602.Caul_1623"/>
<dbReference type="KEGG" id="cak:Caul_1623"/>
<dbReference type="eggNOG" id="COG0186">
    <property type="taxonomic scope" value="Bacteria"/>
</dbReference>
<dbReference type="HOGENOM" id="CLU_073626_1_1_5"/>
<dbReference type="OrthoDB" id="9811714at2"/>
<dbReference type="GO" id="GO:0022627">
    <property type="term" value="C:cytosolic small ribosomal subunit"/>
    <property type="evidence" value="ECO:0007669"/>
    <property type="project" value="TreeGrafter"/>
</dbReference>
<dbReference type="GO" id="GO:0019843">
    <property type="term" value="F:rRNA binding"/>
    <property type="evidence" value="ECO:0007669"/>
    <property type="project" value="UniProtKB-UniRule"/>
</dbReference>
<dbReference type="GO" id="GO:0003735">
    <property type="term" value="F:structural constituent of ribosome"/>
    <property type="evidence" value="ECO:0007669"/>
    <property type="project" value="InterPro"/>
</dbReference>
<dbReference type="GO" id="GO:0006412">
    <property type="term" value="P:translation"/>
    <property type="evidence" value="ECO:0007669"/>
    <property type="project" value="UniProtKB-UniRule"/>
</dbReference>
<dbReference type="CDD" id="cd00364">
    <property type="entry name" value="Ribosomal_uS17"/>
    <property type="match status" value="1"/>
</dbReference>
<dbReference type="Gene3D" id="2.40.50.140">
    <property type="entry name" value="Nucleic acid-binding proteins"/>
    <property type="match status" value="1"/>
</dbReference>
<dbReference type="HAMAP" id="MF_01345_B">
    <property type="entry name" value="Ribosomal_uS17_B"/>
    <property type="match status" value="1"/>
</dbReference>
<dbReference type="InterPro" id="IPR012340">
    <property type="entry name" value="NA-bd_OB-fold"/>
</dbReference>
<dbReference type="InterPro" id="IPR000266">
    <property type="entry name" value="Ribosomal_uS17"/>
</dbReference>
<dbReference type="InterPro" id="IPR019984">
    <property type="entry name" value="Ribosomal_uS17_bact/chlr"/>
</dbReference>
<dbReference type="NCBIfam" id="NF004123">
    <property type="entry name" value="PRK05610.1"/>
    <property type="match status" value="1"/>
</dbReference>
<dbReference type="NCBIfam" id="TIGR03635">
    <property type="entry name" value="uS17_bact"/>
    <property type="match status" value="1"/>
</dbReference>
<dbReference type="PANTHER" id="PTHR10744">
    <property type="entry name" value="40S RIBOSOMAL PROTEIN S11 FAMILY MEMBER"/>
    <property type="match status" value="1"/>
</dbReference>
<dbReference type="PANTHER" id="PTHR10744:SF1">
    <property type="entry name" value="SMALL RIBOSOMAL SUBUNIT PROTEIN US17M"/>
    <property type="match status" value="1"/>
</dbReference>
<dbReference type="Pfam" id="PF00366">
    <property type="entry name" value="Ribosomal_S17"/>
    <property type="match status" value="1"/>
</dbReference>
<dbReference type="PRINTS" id="PR00973">
    <property type="entry name" value="RIBOSOMALS17"/>
</dbReference>
<dbReference type="SUPFAM" id="SSF50249">
    <property type="entry name" value="Nucleic acid-binding proteins"/>
    <property type="match status" value="1"/>
</dbReference>
<feature type="chain" id="PRO_1000086833" description="Small ribosomal subunit protein uS17">
    <location>
        <begin position="1"/>
        <end position="79"/>
    </location>
</feature>
<organism>
    <name type="scientific">Caulobacter sp. (strain K31)</name>
    <dbReference type="NCBI Taxonomy" id="366602"/>
    <lineage>
        <taxon>Bacteria</taxon>
        <taxon>Pseudomonadati</taxon>
        <taxon>Pseudomonadota</taxon>
        <taxon>Alphaproteobacteria</taxon>
        <taxon>Caulobacterales</taxon>
        <taxon>Caulobacteraceae</taxon>
        <taxon>Caulobacter</taxon>
    </lineage>
</organism>
<keyword id="KW-0687">Ribonucleoprotein</keyword>
<keyword id="KW-0689">Ribosomal protein</keyword>
<keyword id="KW-0694">RNA-binding</keyword>
<keyword id="KW-0699">rRNA-binding</keyword>
<accession>B0T2D1</accession>
<reference key="1">
    <citation type="submission" date="2008-01" db="EMBL/GenBank/DDBJ databases">
        <title>Complete sequence of chromosome of Caulobacter sp. K31.</title>
        <authorList>
            <consortium name="US DOE Joint Genome Institute"/>
            <person name="Copeland A."/>
            <person name="Lucas S."/>
            <person name="Lapidus A."/>
            <person name="Barry K."/>
            <person name="Glavina del Rio T."/>
            <person name="Dalin E."/>
            <person name="Tice H."/>
            <person name="Pitluck S."/>
            <person name="Bruce D."/>
            <person name="Goodwin L."/>
            <person name="Thompson L.S."/>
            <person name="Brettin T."/>
            <person name="Detter J.C."/>
            <person name="Han C."/>
            <person name="Schmutz J."/>
            <person name="Larimer F."/>
            <person name="Land M."/>
            <person name="Hauser L."/>
            <person name="Kyrpides N."/>
            <person name="Kim E."/>
            <person name="Stephens C."/>
            <person name="Richardson P."/>
        </authorList>
    </citation>
    <scope>NUCLEOTIDE SEQUENCE [LARGE SCALE GENOMIC DNA]</scope>
    <source>
        <strain>K31</strain>
    </source>
</reference>
<name>RS17_CAUSK</name>
<gene>
    <name evidence="1" type="primary">rpsQ</name>
    <name type="ordered locus">Caul_1623</name>
</gene>
<comment type="function">
    <text evidence="1">One of the primary rRNA binding proteins, it binds specifically to the 5'-end of 16S ribosomal RNA.</text>
</comment>
<comment type="subunit">
    <text evidence="1">Part of the 30S ribosomal subunit.</text>
</comment>
<comment type="similarity">
    <text evidence="1">Belongs to the universal ribosomal protein uS17 family.</text>
</comment>
<proteinExistence type="inferred from homology"/>
<protein>
    <recommendedName>
        <fullName evidence="1">Small ribosomal subunit protein uS17</fullName>
    </recommendedName>
    <alternativeName>
        <fullName evidence="2">30S ribosomal protein S17</fullName>
    </alternativeName>
</protein>
<sequence length="79" mass="8862">MPKRILEGVVVSDKGDKTVVVKVERTIVHPLLKKIVRRSKKYHAHDESNAYKAGEVARIVECAPKSKLKTWEVLPKASA</sequence>
<evidence type="ECO:0000255" key="1">
    <source>
        <dbReference type="HAMAP-Rule" id="MF_01345"/>
    </source>
</evidence>
<evidence type="ECO:0000305" key="2"/>